<keyword id="KW-0963">Cytoplasm</keyword>
<keyword id="KW-0342">GTP-binding</keyword>
<keyword id="KW-0436">Ligase</keyword>
<keyword id="KW-0460">Magnesium</keyword>
<keyword id="KW-0479">Metal-binding</keyword>
<keyword id="KW-0547">Nucleotide-binding</keyword>
<keyword id="KW-0658">Purine biosynthesis</keyword>
<keyword id="KW-1185">Reference proteome</keyword>
<proteinExistence type="inferred from homology"/>
<sequence length="432" mass="46695">MPNVVVVGAQWGDEGKGKIVDLLTQYADVVVRFQGGNNAGHTLVVGGEKTVLHLIPSGILHPGKSCVIGNGVVIDPEVLVLEIDRLKAKGALKDDGQLVVSLDAHVIMPWHKAIDVAREQAMGEGKIGTTGRGIGPTYEDKVARRGLRIRDLLDEARLARKVKERAALAREELARLGAKLELDEPALVKRYAELGRRVAGYATDVSIWLHRALQQGKSLLFEGAQGTMLDVDHGTYPFVTSSNTVAGNAVVGCGLGPTAVDYVLGISKAYSTRVGGGPYPTELKDETGERLRKIGGEYGATTGRPRRTGWLDALALRYAVRVNGLSGIAMTKLDVLTGFDTVKIAVGYRLDGKVLDEMPSDPEVIERCTPVYEELPGWTEKLEHLRTWDDLPPRARAYVKRVEELAGVKVVGCSVGADRGETILVENPFLAR</sequence>
<protein>
    <recommendedName>
        <fullName evidence="1">Adenylosuccinate synthetase</fullName>
        <shortName evidence="1">AMPSase</shortName>
        <shortName evidence="1">AdSS</shortName>
        <ecNumber evidence="1">6.3.4.4</ecNumber>
    </recommendedName>
    <alternativeName>
        <fullName evidence="1">IMP--aspartate ligase</fullName>
    </alternativeName>
</protein>
<gene>
    <name evidence="1" type="primary">purA</name>
    <name type="ordered locus">Adeh_1265</name>
</gene>
<organism>
    <name type="scientific">Anaeromyxobacter dehalogenans (strain 2CP-C)</name>
    <dbReference type="NCBI Taxonomy" id="290397"/>
    <lineage>
        <taxon>Bacteria</taxon>
        <taxon>Pseudomonadati</taxon>
        <taxon>Myxococcota</taxon>
        <taxon>Myxococcia</taxon>
        <taxon>Myxococcales</taxon>
        <taxon>Cystobacterineae</taxon>
        <taxon>Anaeromyxobacteraceae</taxon>
        <taxon>Anaeromyxobacter</taxon>
    </lineage>
</organism>
<reference key="1">
    <citation type="submission" date="2006-01" db="EMBL/GenBank/DDBJ databases">
        <title>Complete sequence of Anaeromyxobacter dehalogenans 2CP-C.</title>
        <authorList>
            <person name="Copeland A."/>
            <person name="Lucas S."/>
            <person name="Lapidus A."/>
            <person name="Barry K."/>
            <person name="Detter J.C."/>
            <person name="Glavina T."/>
            <person name="Hammon N."/>
            <person name="Israni S."/>
            <person name="Pitluck S."/>
            <person name="Brettin T."/>
            <person name="Bruce D."/>
            <person name="Han C."/>
            <person name="Tapia R."/>
            <person name="Gilna P."/>
            <person name="Kiss H."/>
            <person name="Schmutz J."/>
            <person name="Larimer F."/>
            <person name="Land M."/>
            <person name="Kyrpides N."/>
            <person name="Anderson I."/>
            <person name="Sanford R.A."/>
            <person name="Ritalahti K.M."/>
            <person name="Thomas H.S."/>
            <person name="Kirby J.R."/>
            <person name="Zhulin I.B."/>
            <person name="Loeffler F.E."/>
            <person name="Richardson P."/>
        </authorList>
    </citation>
    <scope>NUCLEOTIDE SEQUENCE [LARGE SCALE GENOMIC DNA]</scope>
    <source>
        <strain>2CP-C</strain>
    </source>
</reference>
<name>PURA_ANADE</name>
<dbReference type="EC" id="6.3.4.4" evidence="1"/>
<dbReference type="EMBL" id="CP000251">
    <property type="protein sequence ID" value="ABC81039.1"/>
    <property type="molecule type" value="Genomic_DNA"/>
</dbReference>
<dbReference type="RefSeq" id="WP_011420322.1">
    <property type="nucleotide sequence ID" value="NC_007760.1"/>
</dbReference>
<dbReference type="SMR" id="Q2IQF7"/>
<dbReference type="STRING" id="290397.Adeh_1265"/>
<dbReference type="KEGG" id="ade:Adeh_1265"/>
<dbReference type="eggNOG" id="COG0104">
    <property type="taxonomic scope" value="Bacteria"/>
</dbReference>
<dbReference type="HOGENOM" id="CLU_029848_0_0_7"/>
<dbReference type="OrthoDB" id="9807553at2"/>
<dbReference type="UniPathway" id="UPA00075">
    <property type="reaction ID" value="UER00335"/>
</dbReference>
<dbReference type="Proteomes" id="UP000001935">
    <property type="component" value="Chromosome"/>
</dbReference>
<dbReference type="GO" id="GO:0005737">
    <property type="term" value="C:cytoplasm"/>
    <property type="evidence" value="ECO:0007669"/>
    <property type="project" value="UniProtKB-SubCell"/>
</dbReference>
<dbReference type="GO" id="GO:0004019">
    <property type="term" value="F:adenylosuccinate synthase activity"/>
    <property type="evidence" value="ECO:0007669"/>
    <property type="project" value="UniProtKB-UniRule"/>
</dbReference>
<dbReference type="GO" id="GO:0005525">
    <property type="term" value="F:GTP binding"/>
    <property type="evidence" value="ECO:0007669"/>
    <property type="project" value="UniProtKB-UniRule"/>
</dbReference>
<dbReference type="GO" id="GO:0000287">
    <property type="term" value="F:magnesium ion binding"/>
    <property type="evidence" value="ECO:0007669"/>
    <property type="project" value="UniProtKB-UniRule"/>
</dbReference>
<dbReference type="GO" id="GO:0044208">
    <property type="term" value="P:'de novo' AMP biosynthetic process"/>
    <property type="evidence" value="ECO:0007669"/>
    <property type="project" value="UniProtKB-UniRule"/>
</dbReference>
<dbReference type="GO" id="GO:0046040">
    <property type="term" value="P:IMP metabolic process"/>
    <property type="evidence" value="ECO:0007669"/>
    <property type="project" value="TreeGrafter"/>
</dbReference>
<dbReference type="CDD" id="cd03108">
    <property type="entry name" value="AdSS"/>
    <property type="match status" value="1"/>
</dbReference>
<dbReference type="FunFam" id="1.10.300.10:FF:000001">
    <property type="entry name" value="Adenylosuccinate synthetase"/>
    <property type="match status" value="1"/>
</dbReference>
<dbReference type="FunFam" id="3.90.170.10:FF:000001">
    <property type="entry name" value="Adenylosuccinate synthetase"/>
    <property type="match status" value="1"/>
</dbReference>
<dbReference type="Gene3D" id="3.40.440.10">
    <property type="entry name" value="Adenylosuccinate Synthetase, subunit A, domain 1"/>
    <property type="match status" value="1"/>
</dbReference>
<dbReference type="Gene3D" id="1.10.300.10">
    <property type="entry name" value="Adenylosuccinate Synthetase, subunit A, domain 2"/>
    <property type="match status" value="1"/>
</dbReference>
<dbReference type="Gene3D" id="3.90.170.10">
    <property type="entry name" value="Adenylosuccinate Synthetase, subunit A, domain 3"/>
    <property type="match status" value="1"/>
</dbReference>
<dbReference type="HAMAP" id="MF_00011">
    <property type="entry name" value="Adenylosucc_synth"/>
    <property type="match status" value="1"/>
</dbReference>
<dbReference type="InterPro" id="IPR018220">
    <property type="entry name" value="Adenylosuccin_syn_GTP-bd"/>
</dbReference>
<dbReference type="InterPro" id="IPR033128">
    <property type="entry name" value="Adenylosuccin_syn_Lys_AS"/>
</dbReference>
<dbReference type="InterPro" id="IPR042109">
    <property type="entry name" value="Adenylosuccinate_synth_dom1"/>
</dbReference>
<dbReference type="InterPro" id="IPR042110">
    <property type="entry name" value="Adenylosuccinate_synth_dom2"/>
</dbReference>
<dbReference type="InterPro" id="IPR042111">
    <property type="entry name" value="Adenylosuccinate_synth_dom3"/>
</dbReference>
<dbReference type="InterPro" id="IPR001114">
    <property type="entry name" value="Adenylosuccinate_synthetase"/>
</dbReference>
<dbReference type="InterPro" id="IPR027417">
    <property type="entry name" value="P-loop_NTPase"/>
</dbReference>
<dbReference type="NCBIfam" id="NF002223">
    <property type="entry name" value="PRK01117.1"/>
    <property type="match status" value="1"/>
</dbReference>
<dbReference type="NCBIfam" id="TIGR00184">
    <property type="entry name" value="purA"/>
    <property type="match status" value="1"/>
</dbReference>
<dbReference type="PANTHER" id="PTHR11846">
    <property type="entry name" value="ADENYLOSUCCINATE SYNTHETASE"/>
    <property type="match status" value="1"/>
</dbReference>
<dbReference type="PANTHER" id="PTHR11846:SF0">
    <property type="entry name" value="ADENYLOSUCCINATE SYNTHETASE"/>
    <property type="match status" value="1"/>
</dbReference>
<dbReference type="Pfam" id="PF00709">
    <property type="entry name" value="Adenylsucc_synt"/>
    <property type="match status" value="1"/>
</dbReference>
<dbReference type="SMART" id="SM00788">
    <property type="entry name" value="Adenylsucc_synt"/>
    <property type="match status" value="1"/>
</dbReference>
<dbReference type="SUPFAM" id="SSF52540">
    <property type="entry name" value="P-loop containing nucleoside triphosphate hydrolases"/>
    <property type="match status" value="1"/>
</dbReference>
<dbReference type="PROSITE" id="PS01266">
    <property type="entry name" value="ADENYLOSUCCIN_SYN_1"/>
    <property type="match status" value="1"/>
</dbReference>
<dbReference type="PROSITE" id="PS00513">
    <property type="entry name" value="ADENYLOSUCCIN_SYN_2"/>
    <property type="match status" value="1"/>
</dbReference>
<feature type="chain" id="PRO_1000000773" description="Adenylosuccinate synthetase">
    <location>
        <begin position="1"/>
        <end position="432"/>
    </location>
</feature>
<feature type="active site" description="Proton acceptor" evidence="1">
    <location>
        <position position="13"/>
    </location>
</feature>
<feature type="active site" description="Proton donor" evidence="1">
    <location>
        <position position="41"/>
    </location>
</feature>
<feature type="binding site" evidence="1">
    <location>
        <begin position="12"/>
        <end position="18"/>
    </location>
    <ligand>
        <name>GTP</name>
        <dbReference type="ChEBI" id="CHEBI:37565"/>
    </ligand>
</feature>
<feature type="binding site" description="in other chain" evidence="1">
    <location>
        <begin position="13"/>
        <end position="16"/>
    </location>
    <ligand>
        <name>IMP</name>
        <dbReference type="ChEBI" id="CHEBI:58053"/>
        <note>ligand shared between dimeric partners</note>
    </ligand>
</feature>
<feature type="binding site" evidence="1">
    <location>
        <position position="13"/>
    </location>
    <ligand>
        <name>Mg(2+)</name>
        <dbReference type="ChEBI" id="CHEBI:18420"/>
    </ligand>
</feature>
<feature type="binding site" description="in other chain" evidence="1">
    <location>
        <begin position="38"/>
        <end position="41"/>
    </location>
    <ligand>
        <name>IMP</name>
        <dbReference type="ChEBI" id="CHEBI:58053"/>
        <note>ligand shared between dimeric partners</note>
    </ligand>
</feature>
<feature type="binding site" evidence="1">
    <location>
        <begin position="40"/>
        <end position="42"/>
    </location>
    <ligand>
        <name>GTP</name>
        <dbReference type="ChEBI" id="CHEBI:37565"/>
    </ligand>
</feature>
<feature type="binding site" evidence="1">
    <location>
        <position position="40"/>
    </location>
    <ligand>
        <name>Mg(2+)</name>
        <dbReference type="ChEBI" id="CHEBI:18420"/>
    </ligand>
</feature>
<feature type="binding site" description="in other chain" evidence="1">
    <location>
        <position position="130"/>
    </location>
    <ligand>
        <name>IMP</name>
        <dbReference type="ChEBI" id="CHEBI:58053"/>
        <note>ligand shared between dimeric partners</note>
    </ligand>
</feature>
<feature type="binding site" evidence="1">
    <location>
        <position position="144"/>
    </location>
    <ligand>
        <name>IMP</name>
        <dbReference type="ChEBI" id="CHEBI:58053"/>
        <note>ligand shared between dimeric partners</note>
    </ligand>
</feature>
<feature type="binding site" description="in other chain" evidence="1">
    <location>
        <position position="225"/>
    </location>
    <ligand>
        <name>IMP</name>
        <dbReference type="ChEBI" id="CHEBI:58053"/>
        <note>ligand shared between dimeric partners</note>
    </ligand>
</feature>
<feature type="binding site" description="in other chain" evidence="1">
    <location>
        <position position="240"/>
    </location>
    <ligand>
        <name>IMP</name>
        <dbReference type="ChEBI" id="CHEBI:58053"/>
        <note>ligand shared between dimeric partners</note>
    </ligand>
</feature>
<feature type="binding site" evidence="1">
    <location>
        <begin position="300"/>
        <end position="306"/>
    </location>
    <ligand>
        <name>substrate</name>
    </ligand>
</feature>
<feature type="binding site" description="in other chain" evidence="1">
    <location>
        <position position="304"/>
    </location>
    <ligand>
        <name>IMP</name>
        <dbReference type="ChEBI" id="CHEBI:58053"/>
        <note>ligand shared between dimeric partners</note>
    </ligand>
</feature>
<feature type="binding site" evidence="1">
    <location>
        <position position="306"/>
    </location>
    <ligand>
        <name>GTP</name>
        <dbReference type="ChEBI" id="CHEBI:37565"/>
    </ligand>
</feature>
<feature type="binding site" evidence="1">
    <location>
        <begin position="332"/>
        <end position="334"/>
    </location>
    <ligand>
        <name>GTP</name>
        <dbReference type="ChEBI" id="CHEBI:37565"/>
    </ligand>
</feature>
<feature type="binding site" evidence="1">
    <location>
        <begin position="414"/>
        <end position="416"/>
    </location>
    <ligand>
        <name>GTP</name>
        <dbReference type="ChEBI" id="CHEBI:37565"/>
    </ligand>
</feature>
<accession>Q2IQF7</accession>
<comment type="function">
    <text evidence="1">Plays an important role in the de novo pathway of purine nucleotide biosynthesis. Catalyzes the first committed step in the biosynthesis of AMP from IMP.</text>
</comment>
<comment type="catalytic activity">
    <reaction evidence="1">
        <text>IMP + L-aspartate + GTP = N(6)-(1,2-dicarboxyethyl)-AMP + GDP + phosphate + 2 H(+)</text>
        <dbReference type="Rhea" id="RHEA:15753"/>
        <dbReference type="ChEBI" id="CHEBI:15378"/>
        <dbReference type="ChEBI" id="CHEBI:29991"/>
        <dbReference type="ChEBI" id="CHEBI:37565"/>
        <dbReference type="ChEBI" id="CHEBI:43474"/>
        <dbReference type="ChEBI" id="CHEBI:57567"/>
        <dbReference type="ChEBI" id="CHEBI:58053"/>
        <dbReference type="ChEBI" id="CHEBI:58189"/>
        <dbReference type="EC" id="6.3.4.4"/>
    </reaction>
</comment>
<comment type="cofactor">
    <cofactor evidence="1">
        <name>Mg(2+)</name>
        <dbReference type="ChEBI" id="CHEBI:18420"/>
    </cofactor>
    <text evidence="1">Binds 1 Mg(2+) ion per subunit.</text>
</comment>
<comment type="pathway">
    <text evidence="1">Purine metabolism; AMP biosynthesis via de novo pathway; AMP from IMP: step 1/2.</text>
</comment>
<comment type="subunit">
    <text evidence="1">Homodimer.</text>
</comment>
<comment type="subcellular location">
    <subcellularLocation>
        <location evidence="1">Cytoplasm</location>
    </subcellularLocation>
</comment>
<comment type="similarity">
    <text evidence="1">Belongs to the adenylosuccinate synthetase family.</text>
</comment>
<evidence type="ECO:0000255" key="1">
    <source>
        <dbReference type="HAMAP-Rule" id="MF_00011"/>
    </source>
</evidence>